<comment type="function">
    <text evidence="3">Plays a stimulatory role on natural killer (NK) cell cytotoxicity.</text>
</comment>
<comment type="subunit">
    <text evidence="4">Homodimer; disulfide-linked. Interacts with tyrosine kinase LCK.</text>
</comment>
<comment type="subcellular location">
    <subcellularLocation>
        <location>Membrane</location>
        <topology>Single-pass type II membrane protein</topology>
    </subcellularLocation>
</comment>
<comment type="tissue specificity">
    <text>Expressed in natural killer cells.</text>
</comment>
<comment type="miscellaneous">
    <text>Ligand binding may be calcium dependent.</text>
</comment>
<reference key="1">
    <citation type="journal article" date="1990" name="Science">
        <title>NKR-P1, a signal transduction molecule on natural killer cells.</title>
        <authorList>
            <person name="Giorda R."/>
            <person name="Rudert W.A."/>
            <person name="Vavassori C."/>
            <person name="Chambers W.H."/>
            <person name="Hiserodt J.C."/>
            <person name="Trucco M."/>
        </authorList>
    </citation>
    <scope>NUCLEOTIDE SEQUENCE [MRNA]</scope>
</reference>
<reference key="2">
    <citation type="journal article" date="2007" name="Immunity">
        <title>Cytomegalovirus evasion of innate immunity by subversion of the NKR-P1B:Ocil/Clr-b missing-self axis.</title>
        <authorList>
            <person name="Voigt S."/>
            <person name="Mesci A."/>
            <person name="Ettinger J."/>
            <person name="Fine J.H."/>
            <person name="Chen P."/>
            <person name="Chou W."/>
            <person name="Carlyle J.R."/>
        </authorList>
    </citation>
    <scope>NUCLEOTIDE SEQUENCE [MRNA]</scope>
    <source>
        <strain>Fischer 344</strain>
        <strain>Sprague-Dawley</strain>
        <strain>WAG</strain>
        <tissue>Spleen</tissue>
    </source>
</reference>
<reference key="3">
    <citation type="journal article" date="1997" name="Eur. J. Immunol.">
        <title>The cytoplasmic domain of rat NKR-P1 receptor interacts with the N-terminal domain of p56(lck) via cysteine residues.</title>
        <authorList>
            <person name="Campbell K.S."/>
            <person name="Giorda R."/>
        </authorList>
    </citation>
    <scope>INTERACTION WITH LCK</scope>
</reference>
<reference key="4">
    <citation type="journal article" date="2003" name="Int. Immunol.">
        <title>Expression cloning and function of the rat NK activating and inhibitory receptors NKR-P1A and -P1B.</title>
        <authorList>
            <person name="Li J."/>
            <person name="Rabinovich B.A."/>
            <person name="Hurren R."/>
            <person name="Shannon J."/>
            <person name="Miller R.G."/>
        </authorList>
    </citation>
    <scope>FUNCTION</scope>
</reference>
<keyword id="KW-1015">Disulfide bond</keyword>
<keyword id="KW-0430">Lectin</keyword>
<keyword id="KW-0472">Membrane</keyword>
<keyword id="KW-0675">Receptor</keyword>
<keyword id="KW-1185">Reference proteome</keyword>
<keyword id="KW-0735">Signal-anchor</keyword>
<keyword id="KW-0812">Transmembrane</keyword>
<keyword id="KW-1133">Transmembrane helix</keyword>
<evidence type="ECO:0000255" key="1"/>
<evidence type="ECO:0000255" key="2">
    <source>
        <dbReference type="PROSITE-ProRule" id="PRU00040"/>
    </source>
</evidence>
<evidence type="ECO:0000269" key="3">
    <source>
    </source>
</evidence>
<evidence type="ECO:0000269" key="4">
    <source>
    </source>
</evidence>
<evidence type="ECO:0000305" key="5"/>
<dbReference type="EMBL" id="M62891">
    <property type="protein sequence ID" value="AAA41710.1"/>
    <property type="molecule type" value="mRNA"/>
</dbReference>
<dbReference type="EMBL" id="EF100677">
    <property type="protein sequence ID" value="ABO15817.1"/>
    <property type="molecule type" value="mRNA"/>
</dbReference>
<dbReference type="EMBL" id="EF100681">
    <property type="protein sequence ID" value="ABO15821.1"/>
    <property type="molecule type" value="mRNA"/>
</dbReference>
<dbReference type="EMBL" id="EF100683">
    <property type="protein sequence ID" value="ABO15823.1"/>
    <property type="molecule type" value="mRNA"/>
</dbReference>
<dbReference type="PIR" id="A35917">
    <property type="entry name" value="A35917"/>
</dbReference>
<dbReference type="RefSeq" id="NP_001010964.1">
    <property type="nucleotide sequence ID" value="NM_001010964.2"/>
</dbReference>
<dbReference type="SMR" id="P27471"/>
<dbReference type="FunCoup" id="P27471">
    <property type="interactions" value="17"/>
</dbReference>
<dbReference type="STRING" id="10116.ENSRNOP00000009594"/>
<dbReference type="BindingDB" id="P27471"/>
<dbReference type="ChEMBL" id="CHEMBL3308948"/>
<dbReference type="DrugCentral" id="P27471"/>
<dbReference type="PaxDb" id="10116-ENSRNOP00000009594"/>
<dbReference type="GeneID" id="362443"/>
<dbReference type="KEGG" id="rno:362443"/>
<dbReference type="UCSC" id="RGD:1586149">
    <property type="organism name" value="rat"/>
</dbReference>
<dbReference type="AGR" id="RGD:1586149"/>
<dbReference type="CTD" id="17057"/>
<dbReference type="RGD" id="1586149">
    <property type="gene designation" value="Klrb1a"/>
</dbReference>
<dbReference type="eggNOG" id="KOG4297">
    <property type="taxonomic scope" value="Eukaryota"/>
</dbReference>
<dbReference type="InParanoid" id="P27471"/>
<dbReference type="OrthoDB" id="8950604at2759"/>
<dbReference type="TreeFam" id="TF337735"/>
<dbReference type="PRO" id="PR:P27471"/>
<dbReference type="Proteomes" id="UP000002494">
    <property type="component" value="Unplaced"/>
</dbReference>
<dbReference type="GO" id="GO:0009986">
    <property type="term" value="C:cell surface"/>
    <property type="evidence" value="ECO:0000318"/>
    <property type="project" value="GO_Central"/>
</dbReference>
<dbReference type="GO" id="GO:0005886">
    <property type="term" value="C:plasma membrane"/>
    <property type="evidence" value="ECO:0000266"/>
    <property type="project" value="RGD"/>
</dbReference>
<dbReference type="GO" id="GO:0030246">
    <property type="term" value="F:carbohydrate binding"/>
    <property type="evidence" value="ECO:0007669"/>
    <property type="project" value="UniProtKB-KW"/>
</dbReference>
<dbReference type="GO" id="GO:0038023">
    <property type="term" value="F:signaling receptor activity"/>
    <property type="evidence" value="ECO:0000318"/>
    <property type="project" value="GO_Central"/>
</dbReference>
<dbReference type="GO" id="GO:0042269">
    <property type="term" value="P:regulation of natural killer cell mediated cytotoxicity"/>
    <property type="evidence" value="ECO:0000318"/>
    <property type="project" value="GO_Central"/>
</dbReference>
<dbReference type="CDD" id="cd03593">
    <property type="entry name" value="CLECT_NK_receptors_like"/>
    <property type="match status" value="1"/>
</dbReference>
<dbReference type="Gene3D" id="3.10.100.10">
    <property type="entry name" value="Mannose-Binding Protein A, subunit A"/>
    <property type="match status" value="1"/>
</dbReference>
<dbReference type="InterPro" id="IPR001304">
    <property type="entry name" value="C-type_lectin-like"/>
</dbReference>
<dbReference type="InterPro" id="IPR016186">
    <property type="entry name" value="C-type_lectin-like/link_sf"/>
</dbReference>
<dbReference type="InterPro" id="IPR016187">
    <property type="entry name" value="CTDL_fold"/>
</dbReference>
<dbReference type="InterPro" id="IPR051527">
    <property type="entry name" value="KLR_subfamily_B"/>
</dbReference>
<dbReference type="InterPro" id="IPR033992">
    <property type="entry name" value="NKR-like_CTLD"/>
</dbReference>
<dbReference type="PANTHER" id="PTHR46784">
    <property type="entry name" value="KILLER CELL LECTIN-LIKE RECEPTOR SUBFAMILY B MEMBER 1"/>
    <property type="match status" value="1"/>
</dbReference>
<dbReference type="PANTHER" id="PTHR46784:SF1">
    <property type="entry name" value="KILLER CELL LECTIN-LIKE RECEPTOR SUBFAMILY B MEMBER 1"/>
    <property type="match status" value="1"/>
</dbReference>
<dbReference type="Pfam" id="PF00059">
    <property type="entry name" value="Lectin_C"/>
    <property type="match status" value="1"/>
</dbReference>
<dbReference type="SMART" id="SM00034">
    <property type="entry name" value="CLECT"/>
    <property type="match status" value="1"/>
</dbReference>
<dbReference type="SUPFAM" id="SSF56436">
    <property type="entry name" value="C-type lectin-like"/>
    <property type="match status" value="1"/>
</dbReference>
<dbReference type="PROSITE" id="PS50041">
    <property type="entry name" value="C_TYPE_LECTIN_2"/>
    <property type="match status" value="1"/>
</dbReference>
<proteinExistence type="evidence at protein level"/>
<accession>P27471</accession>
<accession>A4KW96</accession>
<accession>A4KWA2</accession>
<gene>
    <name type="primary">Klrb1a</name>
    <name type="synonym">Nkrp1a</name>
</gene>
<organism>
    <name type="scientific">Rattus norvegicus</name>
    <name type="common">Rat</name>
    <dbReference type="NCBI Taxonomy" id="10116"/>
    <lineage>
        <taxon>Eukaryota</taxon>
        <taxon>Metazoa</taxon>
        <taxon>Chordata</taxon>
        <taxon>Craniata</taxon>
        <taxon>Vertebrata</taxon>
        <taxon>Euteleostomi</taxon>
        <taxon>Mammalia</taxon>
        <taxon>Eutheria</taxon>
        <taxon>Euarchontoglires</taxon>
        <taxon>Glires</taxon>
        <taxon>Rodentia</taxon>
        <taxon>Myomorpha</taxon>
        <taxon>Muroidea</taxon>
        <taxon>Muridae</taxon>
        <taxon>Murinae</taxon>
        <taxon>Rattus</taxon>
    </lineage>
</organism>
<name>KLRBA_RAT</name>
<sequence>MDTARVYLSLKPSKTAAGAQCVSPPSLPPDACRCPRSHRLALKLSCAGLILLVLALVGMSILVRVLVQKPSVEPCRVLIQENLSKTGSPAKLKCPKDWLSHRDKCFHVSQTSITWKESLADCGGKGATLLLVQDQEELRFLRNLTKRISSSFWIGLSYTLSDENWKWINGSTLNSDVLSITGDTEKDSCASVSQDKVLSESCDSDNIWVCQKELKCECMCNDS</sequence>
<feature type="chain" id="PRO_0000046677" description="Killer cell lectin-like receptor subfamily B member 1A">
    <location>
        <begin position="1"/>
        <end position="223"/>
    </location>
</feature>
<feature type="topological domain" description="Cytoplasmic" evidence="1">
    <location>
        <begin position="1"/>
        <end position="43"/>
    </location>
</feature>
<feature type="transmembrane region" description="Helical; Signal-anchor for type II membrane protein" evidence="1">
    <location>
        <begin position="44"/>
        <end position="63"/>
    </location>
</feature>
<feature type="topological domain" description="Extracellular" evidence="1">
    <location>
        <begin position="64"/>
        <end position="223"/>
    </location>
</feature>
<feature type="domain" description="C-type lectin" evidence="2">
    <location>
        <begin position="93"/>
        <end position="212"/>
    </location>
</feature>
<feature type="short sequence motif" description="LCK-binding motif">
    <location>
        <begin position="32"/>
        <end position="35"/>
    </location>
</feature>
<feature type="disulfide bond" evidence="2">
    <location>
        <begin position="94"/>
        <end position="105"/>
    </location>
</feature>
<feature type="disulfide bond" evidence="2">
    <location>
        <begin position="122"/>
        <end position="210"/>
    </location>
</feature>
<feature type="disulfide bond" evidence="2">
    <location>
        <begin position="189"/>
        <end position="202"/>
    </location>
</feature>
<feature type="sequence conflict" description="In Ref. 2; ABO15823." evidence="5" ref="2">
    <original>L</original>
    <variation>F</variation>
    <location>
        <position position="66"/>
    </location>
</feature>
<protein>
    <recommendedName>
        <fullName>Killer cell lectin-like receptor subfamily B member 1A</fullName>
        <shortName>NKR-P1A</shortName>
    </recommendedName>
    <alternativeName>
        <fullName>Antigen 3.2.3</fullName>
    </alternativeName>
    <alternativeName>
        <fullName>CD161 antigen-like family member A</fullName>
    </alternativeName>
    <alternativeName>
        <fullName>Natural killer cell surface protein P1-3.2.3</fullName>
        <shortName>NKR-P1 3.2.3</shortName>
    </alternativeName>
    <cdAntigenName>CD161a</cdAntigenName>
</protein>